<keyword id="KW-0002">3D-structure</keyword>
<keyword id="KW-0025">Alternative splicing</keyword>
<keyword id="KW-0175">Coiled coil</keyword>
<keyword id="KW-0225">Disease variant</keyword>
<keyword id="KW-0890">Hereditary spastic paraplegia</keyword>
<keyword id="KW-0488">Methylation</keyword>
<keyword id="KW-0496">Mitochondrion</keyword>
<keyword id="KW-0523">Neurodegeneration</keyword>
<keyword id="KW-1274">Primary mitochondrial disease</keyword>
<keyword id="KW-0648">Protein biosynthesis</keyword>
<keyword id="KW-1267">Proteomics identification</keyword>
<keyword id="KW-1185">Reference proteome</keyword>
<keyword id="KW-0694">RNA-binding</keyword>
<keyword id="KW-0809">Transit peptide</keyword>
<sequence length="166" mass="18828">MSTVGLFHFPTPLTRICPAPWGLRLWEKLTLLSPGIAVTPVQMAGKKDYPALLSLDENELEEQFVKGHGPGGQATNKTSNCVVLKHIPSGIVVKCHQTRSVDQNRKLARKILQEKVDVFYNGENSPVHKEKREAAKKKQERKKRAKETLEKKKLLKELWESSKKVH</sequence>
<protein>
    <recommendedName>
        <fullName evidence="17">Mitochondrial translation release factor in rescue</fullName>
    </recommendedName>
</protein>
<proteinExistence type="evidence at protein level"/>
<accession>Q9H3J6</accession>
<accession>Q8WUC6</accession>
<comment type="function">
    <text evidence="14">Part of a mitoribosome-associated quality control pathway that prevents aberrant translation by responding to interruptions during elongation (PubMed:33243891). As heterodimer with MTRES1, ejects the unfinished nascent chain and peptidyl transfer RNA (tRNA), respectively, from stalled ribosomes. Recruitment of mitoribosome biogenesis factors to these quality control intermediates suggests additional roles for MTRES1 and MTRF during mitoribosome rescue (PubMed:33243891).</text>
</comment>
<comment type="subunit">
    <text evidence="14">Interacts (via C-terminus) with MTRES1 (via S4 domain) (PubMed:33243891). Associates with mitoribosomal S39 large subunit, peptidyl tRNA and nascent chain (PubMed:33243891).</text>
</comment>
<comment type="interaction">
    <interactant intactId="EBI-3914460">
        <id>Q9H3J6</id>
    </interactant>
    <interactant intactId="EBI-356910">
        <id>Q9H1R3</id>
        <label>MYLK2</label>
    </interactant>
    <organismsDiffer>false</organismsDiffer>
    <experiments>2</experiments>
</comment>
<comment type="subcellular location">
    <subcellularLocation>
        <location evidence="4 5">Mitochondrion</location>
    </subcellularLocation>
</comment>
<comment type="alternative products">
    <event type="alternative splicing"/>
    <isoform>
        <id>Q9H3J6-1</id>
        <name>1</name>
        <sequence type="displayed"/>
    </isoform>
    <isoform>
        <id>Q9H3J6-2</id>
        <name>2</name>
        <sequence type="described" ref="VSP_029602 VSP_029603"/>
    </isoform>
</comment>
<comment type="tissue specificity">
    <text evidence="9">Expressed in all areas of the brain tested.</text>
</comment>
<comment type="domain">
    <text evidence="6 14">The GGQ domain interacts with the peptidyltransferase center (PTC) of the large ribosomal subunit to trigger nascent chain hydrolysis.</text>
</comment>
<comment type="PTM">
    <text evidence="15">Methylation of glutamine in the GGQ triplet by HEMK1.</text>
</comment>
<comment type="disease" evidence="5 10 12 13">
    <disease id="DI-02900">
        <name>Combined oxidative phosphorylation deficiency 7</name>
        <acronym>COXPD7</acronym>
        <description>A mitochondrial disease resulting in encephalomyopathy. Clinical manifestations include psychomotor delay and regression, ataxia, optic atrophy, nystagmus and muscle atrophy and weakness.</description>
        <dbReference type="MIM" id="613559"/>
    </disease>
    <text>The disease is caused by variants affecting the gene represented in this entry.</text>
</comment>
<comment type="disease" evidence="7 8 9 11">
    <disease id="DI-03679">
        <name>Spastic paraplegia 55, autosomal recessive</name>
        <acronym>SPG55</acronym>
        <description>A form of spastic paraplegia, a neurodegenerative disorder characterized by a slow, gradual, progressive weakness and spasticity of the lower limbs. Rate of progression and the severity of symptoms are quite variable. Initial symptoms may include difficulty with balance, weakness and stiffness in the legs, muscle spasms, and dragging the toes when walking. Complicated forms are recognized by additional variable features including spastic quadriparesis, seizures, dementia, amyotrophy, extrapyramidal disturbance, cerebral or cerebellar atrophy, optic atrophy, and peripheral neuropathy, as well as by extra neurological manifestations.</description>
        <dbReference type="MIM" id="615035"/>
    </disease>
    <text>The disease is caused by variants affecting the gene represented in this entry.</text>
</comment>
<comment type="similarity">
    <text evidence="17">Belongs to the prokaryotic/mitochondrial release factor family.</text>
</comment>
<comment type="caution">
    <text evidence="17">In contrast to other members of the family, lacks the regions that come into close contact with the mRNA in the ribosomal A-site and determine the STOP codon specificity, suggesting a loss of codon specificity for translation release factor activity.</text>
</comment>
<dbReference type="EMBL" id="AF061733">
    <property type="protein sequence ID" value="AAG43144.1"/>
    <property type="molecule type" value="mRNA"/>
</dbReference>
<dbReference type="EMBL" id="AK095982">
    <property type="protein sequence ID" value="BAC04665.1"/>
    <property type="molecule type" value="mRNA"/>
</dbReference>
<dbReference type="EMBL" id="CH471054">
    <property type="protein sequence ID" value="EAW98395.1"/>
    <property type="molecule type" value="Genomic_DNA"/>
</dbReference>
<dbReference type="EMBL" id="CH471054">
    <property type="protein sequence ID" value="EAW98396.1"/>
    <property type="molecule type" value="Genomic_DNA"/>
</dbReference>
<dbReference type="EMBL" id="BC018145">
    <property type="protein sequence ID" value="AAH18145.1"/>
    <property type="molecule type" value="mRNA"/>
</dbReference>
<dbReference type="EMBL" id="BC020885">
    <property type="protein sequence ID" value="AAH20885.1"/>
    <property type="molecule type" value="mRNA"/>
</dbReference>
<dbReference type="EMBL" id="BC062329">
    <property type="protein sequence ID" value="AAH62329.1"/>
    <property type="molecule type" value="mRNA"/>
</dbReference>
<dbReference type="CCDS" id="CCDS9244.1">
    <molecule id="Q9H3J6-1"/>
</dbReference>
<dbReference type="RefSeq" id="NP_001137377.1">
    <molecule id="Q9H3J6-1"/>
    <property type="nucleotide sequence ID" value="NM_001143905.2"/>
</dbReference>
<dbReference type="RefSeq" id="NP_001181924.1">
    <molecule id="Q9H3J6-1"/>
    <property type="nucleotide sequence ID" value="NM_001194995.1"/>
</dbReference>
<dbReference type="RefSeq" id="NP_689482.1">
    <molecule id="Q9H3J6-1"/>
    <property type="nucleotide sequence ID" value="NM_152269.5"/>
</dbReference>
<dbReference type="RefSeq" id="XP_005253687.1">
    <property type="nucleotide sequence ID" value="XM_005253630.4"/>
</dbReference>
<dbReference type="RefSeq" id="XP_011537282.1">
    <molecule id="Q9H3J6-1"/>
    <property type="nucleotide sequence ID" value="XM_011538980.4"/>
</dbReference>
<dbReference type="RefSeq" id="XP_024305041.1">
    <molecule id="Q9H3J6-1"/>
    <property type="nucleotide sequence ID" value="XM_024449273.2"/>
</dbReference>
<dbReference type="RefSeq" id="XP_047285833.1">
    <molecule id="Q9H3J6-1"/>
    <property type="nucleotide sequence ID" value="XM_047429877.1"/>
</dbReference>
<dbReference type="RefSeq" id="XP_054229794.1">
    <molecule id="Q9H3J6-1"/>
    <property type="nucleotide sequence ID" value="XM_054373819.1"/>
</dbReference>
<dbReference type="RefSeq" id="XP_054229795.1">
    <molecule id="Q9H3J6-1"/>
    <property type="nucleotide sequence ID" value="XM_054373820.1"/>
</dbReference>
<dbReference type="RefSeq" id="XP_054229796.1">
    <molecule id="Q9H3J6-1"/>
    <property type="nucleotide sequence ID" value="XM_054373821.1"/>
</dbReference>
<dbReference type="PDB" id="7A5H">
    <property type="method" value="EM"/>
    <property type="resolution" value="3.30 A"/>
    <property type="chains" value="C=1-166"/>
</dbReference>
<dbReference type="PDBsum" id="7A5H"/>
<dbReference type="EMDB" id="EMD-11643"/>
<dbReference type="SMR" id="Q9H3J6"/>
<dbReference type="BioGRID" id="124847">
    <property type="interactions" value="228"/>
</dbReference>
<dbReference type="FunCoup" id="Q9H3J6">
    <property type="interactions" value="1502"/>
</dbReference>
<dbReference type="IntAct" id="Q9H3J6">
    <property type="interactions" value="6"/>
</dbReference>
<dbReference type="STRING" id="9606.ENSP00000390647"/>
<dbReference type="GlyGen" id="Q9H3J6">
    <property type="glycosylation" value="2 sites, 1 O-linked glycan (1 site)"/>
</dbReference>
<dbReference type="iPTMnet" id="Q9H3J6"/>
<dbReference type="PhosphoSitePlus" id="Q9H3J6"/>
<dbReference type="BioMuta" id="C12orf65"/>
<dbReference type="DMDM" id="74733574"/>
<dbReference type="jPOST" id="Q9H3J6"/>
<dbReference type="MassIVE" id="Q9H3J6"/>
<dbReference type="PaxDb" id="9606-ENSP00000253233"/>
<dbReference type="PeptideAtlas" id="Q9H3J6"/>
<dbReference type="ProteomicsDB" id="80723">
    <molecule id="Q9H3J6-1"/>
</dbReference>
<dbReference type="ProteomicsDB" id="80724">
    <molecule id="Q9H3J6-2"/>
</dbReference>
<dbReference type="Pumba" id="Q9H3J6"/>
<dbReference type="TopDownProteomics" id="Q9H3J6-1">
    <molecule id="Q9H3J6-1"/>
</dbReference>
<dbReference type="Antibodypedia" id="31771">
    <property type="antibodies" value="54 antibodies from 15 providers"/>
</dbReference>
<dbReference type="DNASU" id="91574"/>
<dbReference type="Ensembl" id="ENST00000253233.6">
    <molecule id="Q9H3J6-1"/>
    <property type="protein sequence ID" value="ENSP00000253233.1"/>
    <property type="gene ID" value="ENSG00000130921.9"/>
</dbReference>
<dbReference type="Ensembl" id="ENST00000366329.7">
    <molecule id="Q9H3J6-1"/>
    <property type="protein sequence ID" value="ENSP00000390647.1"/>
    <property type="gene ID" value="ENSG00000130921.9"/>
</dbReference>
<dbReference type="Ensembl" id="ENST00000425637.3">
    <molecule id="Q9H3J6-2"/>
    <property type="protein sequence ID" value="ENSP00000506680.1"/>
    <property type="gene ID" value="ENSG00000130921.9"/>
</dbReference>
<dbReference type="Ensembl" id="ENST00000429587.2">
    <molecule id="Q9H3J6-1"/>
    <property type="protein sequence ID" value="ENSP00000391513.2"/>
    <property type="gene ID" value="ENSG00000130921.9"/>
</dbReference>
<dbReference type="Ensembl" id="ENST00000536130.2">
    <molecule id="Q9H3J6-1"/>
    <property type="protein sequence ID" value="ENSP00000443072.2"/>
    <property type="gene ID" value="ENSG00000130921.9"/>
</dbReference>
<dbReference type="Ensembl" id="ENST00000538888.6">
    <molecule id="Q9H3J6-2"/>
    <property type="protein sequence ID" value="ENSP00000505059.1"/>
    <property type="gene ID" value="ENSG00000130921.9"/>
</dbReference>
<dbReference type="Ensembl" id="ENST00000543139.2">
    <molecule id="Q9H3J6-1"/>
    <property type="protein sequence ID" value="ENSP00000444843.2"/>
    <property type="gene ID" value="ENSG00000130921.9"/>
</dbReference>
<dbReference type="Ensembl" id="ENST00000546132.2">
    <molecule id="Q9H3J6-2"/>
    <property type="protein sequence ID" value="ENSP00000441796.2"/>
    <property type="gene ID" value="ENSG00000130921.9"/>
</dbReference>
<dbReference type="Ensembl" id="ENST00000679849.1">
    <molecule id="Q9H3J6-1"/>
    <property type="protein sequence ID" value="ENSP00000505808.1"/>
    <property type="gene ID" value="ENSG00000130921.9"/>
</dbReference>
<dbReference type="Ensembl" id="ENST00000680325.1">
    <molecule id="Q9H3J6-2"/>
    <property type="protein sequence ID" value="ENSP00000505277.1"/>
    <property type="gene ID" value="ENSG00000130921.9"/>
</dbReference>
<dbReference type="GeneID" id="91574"/>
<dbReference type="KEGG" id="hsa:91574"/>
<dbReference type="MANE-Select" id="ENST00000253233.6">
    <property type="protein sequence ID" value="ENSP00000253233.1"/>
    <property type="RefSeq nucleotide sequence ID" value="NM_152269.5"/>
    <property type="RefSeq protein sequence ID" value="NP_689482.1"/>
</dbReference>
<dbReference type="UCSC" id="uc001uen.4">
    <molecule id="Q9H3J6-1"/>
    <property type="organism name" value="human"/>
</dbReference>
<dbReference type="AGR" id="HGNC:26784"/>
<dbReference type="CTD" id="91574"/>
<dbReference type="DisGeNET" id="91574"/>
<dbReference type="GeneCards" id="MTRFR"/>
<dbReference type="HGNC" id="HGNC:26784">
    <property type="gene designation" value="MTRFR"/>
</dbReference>
<dbReference type="HPA" id="ENSG00000130921">
    <property type="expression patterns" value="Tissue enhanced (lymphoid)"/>
</dbReference>
<dbReference type="MalaCards" id="MTRFR"/>
<dbReference type="MIM" id="613541">
    <property type="type" value="gene"/>
</dbReference>
<dbReference type="MIM" id="613559">
    <property type="type" value="phenotype"/>
</dbReference>
<dbReference type="MIM" id="615035">
    <property type="type" value="phenotype"/>
</dbReference>
<dbReference type="neXtProt" id="NX_Q9H3J6"/>
<dbReference type="OpenTargets" id="ENSG00000130921"/>
<dbReference type="Orphanet" id="320375">
    <property type="disease" value="Autosomal recessive spastic paraplegia type 55"/>
</dbReference>
<dbReference type="Orphanet" id="254930">
    <property type="disease" value="Combined oxidative phosphorylation defect type 7"/>
</dbReference>
<dbReference type="VEuPathDB" id="HostDB:ENSG00000130921"/>
<dbReference type="eggNOG" id="KOG2726">
    <property type="taxonomic scope" value="Eukaryota"/>
</dbReference>
<dbReference type="GeneTree" id="ENSGT00390000012759"/>
<dbReference type="InParanoid" id="Q9H3J6"/>
<dbReference type="OMA" id="KCHLHRL"/>
<dbReference type="OrthoDB" id="277888at2759"/>
<dbReference type="PAN-GO" id="Q9H3J6">
    <property type="GO annotations" value="1 GO annotation based on evolutionary models"/>
</dbReference>
<dbReference type="PhylomeDB" id="Q9H3J6"/>
<dbReference type="TreeFam" id="TF323274"/>
<dbReference type="PathwayCommons" id="Q9H3J6"/>
<dbReference type="SignaLink" id="Q9H3J6"/>
<dbReference type="BioGRID-ORCS" id="91574">
    <property type="hits" value="73 hits in 1150 CRISPR screens"/>
</dbReference>
<dbReference type="ChiTaRS" id="C12orf65">
    <property type="organism name" value="human"/>
</dbReference>
<dbReference type="GenomeRNAi" id="91574"/>
<dbReference type="Pharos" id="Q9H3J6">
    <property type="development level" value="Tbio"/>
</dbReference>
<dbReference type="PRO" id="PR:Q9H3J6"/>
<dbReference type="Proteomes" id="UP000005640">
    <property type="component" value="Chromosome 12"/>
</dbReference>
<dbReference type="RNAct" id="Q9H3J6">
    <property type="molecule type" value="protein"/>
</dbReference>
<dbReference type="Bgee" id="ENSG00000130921">
    <property type="expression patterns" value="Expressed in thymus and 187 other cell types or tissues"/>
</dbReference>
<dbReference type="ExpressionAtlas" id="Q9H3J6">
    <property type="expression patterns" value="baseline and differential"/>
</dbReference>
<dbReference type="GO" id="GO:0005759">
    <property type="term" value="C:mitochondrial matrix"/>
    <property type="evidence" value="ECO:0000304"/>
    <property type="project" value="FlyBase"/>
</dbReference>
<dbReference type="GO" id="GO:0005739">
    <property type="term" value="C:mitochondrion"/>
    <property type="evidence" value="ECO:0000314"/>
    <property type="project" value="UniProtKB"/>
</dbReference>
<dbReference type="GO" id="GO:0043023">
    <property type="term" value="F:ribosomal large subunit binding"/>
    <property type="evidence" value="ECO:0000314"/>
    <property type="project" value="UniProtKB"/>
</dbReference>
<dbReference type="GO" id="GO:0016149">
    <property type="term" value="F:translation release factor activity, codon specific"/>
    <property type="evidence" value="ECO:0000314"/>
    <property type="project" value="FlyBase"/>
</dbReference>
<dbReference type="GO" id="GO:0000049">
    <property type="term" value="F:tRNA binding"/>
    <property type="evidence" value="ECO:0000314"/>
    <property type="project" value="UniProtKB"/>
</dbReference>
<dbReference type="GO" id="GO:0072344">
    <property type="term" value="P:rescue of stalled ribosome"/>
    <property type="evidence" value="ECO:0000314"/>
    <property type="project" value="UniProtKB"/>
</dbReference>
<dbReference type="FunFam" id="3.30.160.20:FF:000054">
    <property type="entry name" value="Chromosome 12 open reading frame 65"/>
    <property type="match status" value="1"/>
</dbReference>
<dbReference type="Gene3D" id="3.30.160.20">
    <property type="match status" value="1"/>
</dbReference>
<dbReference type="InterPro" id="IPR052405">
    <property type="entry name" value="Mito_Transl_Release_Factor"/>
</dbReference>
<dbReference type="InterPro" id="IPR000352">
    <property type="entry name" value="Pep_chain_release_fac_I"/>
</dbReference>
<dbReference type="InterPro" id="IPR045853">
    <property type="entry name" value="Pep_chain_release_fac_I_sf"/>
</dbReference>
<dbReference type="PANTHER" id="PTHR46203:SF1">
    <property type="entry name" value="MITOCHONDRIAL TRANSLATION RELEASE FACTOR IN RESCUE"/>
    <property type="match status" value="1"/>
</dbReference>
<dbReference type="PANTHER" id="PTHR46203">
    <property type="entry name" value="PROBABLE PEPTIDE CHAIN RELEASE FACTOR C12ORF65"/>
    <property type="match status" value="1"/>
</dbReference>
<dbReference type="Pfam" id="PF00472">
    <property type="entry name" value="RF-1"/>
    <property type="match status" value="1"/>
</dbReference>
<dbReference type="SUPFAM" id="SSF75620">
    <property type="entry name" value="Release factor"/>
    <property type="match status" value="1"/>
</dbReference>
<name>MTRFR_HUMAN</name>
<feature type="transit peptide" description="Mitochondrion" evidence="2">
    <location>
        <begin position="1"/>
        <end position="35"/>
    </location>
</feature>
<feature type="chain" id="PRO_0000311835" description="Mitochondrial translation release factor in rescue">
    <location>
        <begin position="36"/>
        <end position="166"/>
    </location>
</feature>
<feature type="region of interest" description="GGQ domain" evidence="1">
    <location>
        <begin position="57"/>
        <end position="121"/>
    </location>
</feature>
<feature type="region of interest" description="Disordered" evidence="3">
    <location>
        <begin position="122"/>
        <end position="148"/>
    </location>
</feature>
<feature type="coiled-coil region" evidence="2">
    <location>
        <begin position="127"/>
        <end position="160"/>
    </location>
</feature>
<feature type="short sequence motif" description="GGQ" evidence="9">
    <location>
        <begin position="71"/>
        <end position="73"/>
    </location>
</feature>
<feature type="compositionally biased region" description="Basic and acidic residues" evidence="3">
    <location>
        <begin position="126"/>
        <end position="137"/>
    </location>
</feature>
<feature type="modified residue" description="N5-methylglutamine" evidence="15">
    <location>
        <position position="73"/>
    </location>
</feature>
<feature type="splice variant" id="VSP_029602" description="In isoform 2." evidence="16">
    <original>CHQTRSVDQNRKLARKILQEKVDVF</original>
    <variation>VDHRRPLRGEAPPKGSTASRDFSQV</variation>
    <location>
        <begin position="95"/>
        <end position="119"/>
    </location>
</feature>
<feature type="splice variant" id="VSP_029603" description="In isoform 2." evidence="16">
    <location>
        <begin position="120"/>
        <end position="166"/>
    </location>
</feature>
<feature type="sequence variant" id="VAR_084490" description="In COXPD7; decreased cytochrome c oxidase activity in fibroblasts; severe assembly defects in mitochondrial complexes I, IV and V with a milder defect in the assembly of complex III; no effect on mitochondrial transcripts, rRNAs and tRNAs levels." evidence="5">
    <original>VLKHIPSGIVVKCHQTRSVDQNRKLARKILQEKVDVFYNGENSPVHKEKREAAKKKQERKKRAKETLEKKKLLKELWESSKKVH</original>
    <variation>G</variation>
    <location>
        <begin position="83"/>
        <end position="166"/>
    </location>
</feature>
<feature type="sequence variant" id="VAR_084491" description="In SPG55 and COXPD7; decreased activity of mitochondrial respiratory chain; no effect on mitochondrial morphology." evidence="9 10">
    <location>
        <begin position="116"/>
        <end position="166"/>
    </location>
</feature>
<feature type="sequence variant" id="VAR_084492" description="In SPG55." evidence="7">
    <location>
        <begin position="132"/>
        <end position="166"/>
    </location>
</feature>
<feature type="sequence variant" id="VAR_037325" description="In dbSNP:rs1045496.">
    <original>A</original>
    <variation>T</variation>
    <location>
        <position position="134"/>
    </location>
</feature>
<feature type="sequence variant" id="VAR_084493" description="In SPG55." evidence="8">
    <location>
        <begin position="139"/>
        <end position="166"/>
    </location>
</feature>
<reference key="1">
    <citation type="submission" date="1998-04" db="EMBL/GenBank/DDBJ databases">
        <authorList>
            <person name="Mao Y.M."/>
            <person name="Xie Y."/>
            <person name="Ying K."/>
        </authorList>
    </citation>
    <scope>NUCLEOTIDE SEQUENCE [LARGE SCALE MRNA] (ISOFORM 1)</scope>
    <source>
        <tissue>Fetal brain</tissue>
    </source>
</reference>
<reference key="2">
    <citation type="journal article" date="2004" name="Nat. Genet.">
        <title>Complete sequencing and characterization of 21,243 full-length human cDNAs.</title>
        <authorList>
            <person name="Ota T."/>
            <person name="Suzuki Y."/>
            <person name="Nishikawa T."/>
            <person name="Otsuki T."/>
            <person name="Sugiyama T."/>
            <person name="Irie R."/>
            <person name="Wakamatsu A."/>
            <person name="Hayashi K."/>
            <person name="Sato H."/>
            <person name="Nagai K."/>
            <person name="Kimura K."/>
            <person name="Makita H."/>
            <person name="Sekine M."/>
            <person name="Obayashi M."/>
            <person name="Nishi T."/>
            <person name="Shibahara T."/>
            <person name="Tanaka T."/>
            <person name="Ishii S."/>
            <person name="Yamamoto J."/>
            <person name="Saito K."/>
            <person name="Kawai Y."/>
            <person name="Isono Y."/>
            <person name="Nakamura Y."/>
            <person name="Nagahari K."/>
            <person name="Murakami K."/>
            <person name="Yasuda T."/>
            <person name="Iwayanagi T."/>
            <person name="Wagatsuma M."/>
            <person name="Shiratori A."/>
            <person name="Sudo H."/>
            <person name="Hosoiri T."/>
            <person name="Kaku Y."/>
            <person name="Kodaira H."/>
            <person name="Kondo H."/>
            <person name="Sugawara M."/>
            <person name="Takahashi M."/>
            <person name="Kanda K."/>
            <person name="Yokoi T."/>
            <person name="Furuya T."/>
            <person name="Kikkawa E."/>
            <person name="Omura Y."/>
            <person name="Abe K."/>
            <person name="Kamihara K."/>
            <person name="Katsuta N."/>
            <person name="Sato K."/>
            <person name="Tanikawa M."/>
            <person name="Yamazaki M."/>
            <person name="Ninomiya K."/>
            <person name="Ishibashi T."/>
            <person name="Yamashita H."/>
            <person name="Murakawa K."/>
            <person name="Fujimori K."/>
            <person name="Tanai H."/>
            <person name="Kimata M."/>
            <person name="Watanabe M."/>
            <person name="Hiraoka S."/>
            <person name="Chiba Y."/>
            <person name="Ishida S."/>
            <person name="Ono Y."/>
            <person name="Takiguchi S."/>
            <person name="Watanabe S."/>
            <person name="Yosida M."/>
            <person name="Hotuta T."/>
            <person name="Kusano J."/>
            <person name="Kanehori K."/>
            <person name="Takahashi-Fujii A."/>
            <person name="Hara H."/>
            <person name="Tanase T.-O."/>
            <person name="Nomura Y."/>
            <person name="Togiya S."/>
            <person name="Komai F."/>
            <person name="Hara R."/>
            <person name="Takeuchi K."/>
            <person name="Arita M."/>
            <person name="Imose N."/>
            <person name="Musashino K."/>
            <person name="Yuuki H."/>
            <person name="Oshima A."/>
            <person name="Sasaki N."/>
            <person name="Aotsuka S."/>
            <person name="Yoshikawa Y."/>
            <person name="Matsunawa H."/>
            <person name="Ichihara T."/>
            <person name="Shiohata N."/>
            <person name="Sano S."/>
            <person name="Moriya S."/>
            <person name="Momiyama H."/>
            <person name="Satoh N."/>
            <person name="Takami S."/>
            <person name="Terashima Y."/>
            <person name="Suzuki O."/>
            <person name="Nakagawa S."/>
            <person name="Senoh A."/>
            <person name="Mizoguchi H."/>
            <person name="Goto Y."/>
            <person name="Shimizu F."/>
            <person name="Wakebe H."/>
            <person name="Hishigaki H."/>
            <person name="Watanabe T."/>
            <person name="Sugiyama A."/>
            <person name="Takemoto M."/>
            <person name="Kawakami B."/>
            <person name="Yamazaki M."/>
            <person name="Watanabe K."/>
            <person name="Kumagai A."/>
            <person name="Itakura S."/>
            <person name="Fukuzumi Y."/>
            <person name="Fujimori Y."/>
            <person name="Komiyama M."/>
            <person name="Tashiro H."/>
            <person name="Tanigami A."/>
            <person name="Fujiwara T."/>
            <person name="Ono T."/>
            <person name="Yamada K."/>
            <person name="Fujii Y."/>
            <person name="Ozaki K."/>
            <person name="Hirao M."/>
            <person name="Ohmori Y."/>
            <person name="Kawabata A."/>
            <person name="Hikiji T."/>
            <person name="Kobatake N."/>
            <person name="Inagaki H."/>
            <person name="Ikema Y."/>
            <person name="Okamoto S."/>
            <person name="Okitani R."/>
            <person name="Kawakami T."/>
            <person name="Noguchi S."/>
            <person name="Itoh T."/>
            <person name="Shigeta K."/>
            <person name="Senba T."/>
            <person name="Matsumura K."/>
            <person name="Nakajima Y."/>
            <person name="Mizuno T."/>
            <person name="Morinaga M."/>
            <person name="Sasaki M."/>
            <person name="Togashi T."/>
            <person name="Oyama M."/>
            <person name="Hata H."/>
            <person name="Watanabe M."/>
            <person name="Komatsu T."/>
            <person name="Mizushima-Sugano J."/>
            <person name="Satoh T."/>
            <person name="Shirai Y."/>
            <person name="Takahashi Y."/>
            <person name="Nakagawa K."/>
            <person name="Okumura K."/>
            <person name="Nagase T."/>
            <person name="Nomura N."/>
            <person name="Kikuchi H."/>
            <person name="Masuho Y."/>
            <person name="Yamashita R."/>
            <person name="Nakai K."/>
            <person name="Yada T."/>
            <person name="Nakamura Y."/>
            <person name="Ohara O."/>
            <person name="Isogai T."/>
            <person name="Sugano S."/>
        </authorList>
    </citation>
    <scope>NUCLEOTIDE SEQUENCE [LARGE SCALE MRNA] (ISOFORM 1)</scope>
    <source>
        <tissue>Lung</tissue>
    </source>
</reference>
<reference key="3">
    <citation type="submission" date="2005-07" db="EMBL/GenBank/DDBJ databases">
        <authorList>
            <person name="Mural R.J."/>
            <person name="Istrail S."/>
            <person name="Sutton G.G."/>
            <person name="Florea L."/>
            <person name="Halpern A.L."/>
            <person name="Mobarry C.M."/>
            <person name="Lippert R."/>
            <person name="Walenz B."/>
            <person name="Shatkay H."/>
            <person name="Dew I."/>
            <person name="Miller J.R."/>
            <person name="Flanigan M.J."/>
            <person name="Edwards N.J."/>
            <person name="Bolanos R."/>
            <person name="Fasulo D."/>
            <person name="Halldorsson B.V."/>
            <person name="Hannenhalli S."/>
            <person name="Turner R."/>
            <person name="Yooseph S."/>
            <person name="Lu F."/>
            <person name="Nusskern D.R."/>
            <person name="Shue B.C."/>
            <person name="Zheng X.H."/>
            <person name="Zhong F."/>
            <person name="Delcher A.L."/>
            <person name="Huson D.H."/>
            <person name="Kravitz S.A."/>
            <person name="Mouchard L."/>
            <person name="Reinert K."/>
            <person name="Remington K.A."/>
            <person name="Clark A.G."/>
            <person name="Waterman M.S."/>
            <person name="Eichler E.E."/>
            <person name="Adams M.D."/>
            <person name="Hunkapiller M.W."/>
            <person name="Myers E.W."/>
            <person name="Venter J.C."/>
        </authorList>
    </citation>
    <scope>NUCLEOTIDE SEQUENCE [LARGE SCALE GENOMIC DNA]</scope>
</reference>
<reference key="4">
    <citation type="journal article" date="2004" name="Genome Res.">
        <title>The status, quality, and expansion of the NIH full-length cDNA project: the Mammalian Gene Collection (MGC).</title>
        <authorList>
            <consortium name="The MGC Project Team"/>
        </authorList>
    </citation>
    <scope>NUCLEOTIDE SEQUENCE [LARGE SCALE MRNA] (ISOFORMS 1 AND 2)</scope>
    <source>
        <tissue>Blood</tissue>
        <tissue>Colon</tissue>
        <tissue>Testis</tissue>
    </source>
</reference>
<reference key="5">
    <citation type="journal article" date="2010" name="EMBO J.">
        <title>A functional peptidyl-tRNA hydrolase, ICT1, has been recruited into the human mitochondrial ribosome.</title>
        <authorList>
            <person name="Richter R."/>
            <person name="Rorbach J."/>
            <person name="Pajak A."/>
            <person name="Smith P.M."/>
            <person name="Wessels H.J."/>
            <person name="Huynen M.A."/>
            <person name="Smeitink J.A."/>
            <person name="Lightowlers R.N."/>
            <person name="Chrzanowska-Lightowlers Z.M."/>
        </authorList>
    </citation>
    <scope>SUBCELLULAR LOCATION</scope>
</reference>
<reference key="6">
    <citation type="journal article" date="2012" name="Proteins">
        <title>Solution structure and siRNA-mediated knockdown analysis of the mitochondrial disease-related protein C12orf65.</title>
        <authorList>
            <person name="Kogure H."/>
            <person name="Hikawa Y."/>
            <person name="Hagihara M."/>
            <person name="Tochio N."/>
            <person name="Koshiba S."/>
            <person name="Inoue Y."/>
            <person name="Guntert P."/>
            <person name="Kigawa T."/>
            <person name="Yokoyama S."/>
            <person name="Nameki N."/>
        </authorList>
    </citation>
    <scope>DOMAIN</scope>
</reference>
<reference key="7">
    <citation type="journal article" date="2019" name="Nucleic Acids Res.">
        <title>C6orf203 is an RNA-binding protein involved in mitochondrial protein synthesis.</title>
        <authorList>
            <person name="Gopalakrishna S."/>
            <person name="Pearce S.F."/>
            <person name="Dinan A.M."/>
            <person name="Schober F.A."/>
            <person name="Cipullo M."/>
            <person name="Spaahr H."/>
            <person name="Khawaja A."/>
            <person name="Maffezzini C."/>
            <person name="Freyer C."/>
            <person name="Wredenberg A."/>
            <person name="Atanassov I."/>
            <person name="Firth A.E."/>
            <person name="Rorbach J."/>
        </authorList>
    </citation>
    <scope>INTERACTION WITH MTRES1</scope>
</reference>
<reference key="8">
    <citation type="journal article" date="2022" name="Sci. Rep.">
        <title>Mammalian HEMK1 methylates glutamine residue of the GGQ motif of mitochondrial release factors.</title>
        <authorList>
            <person name="Fang Q."/>
            <person name="Kimura Y."/>
            <person name="Shimazu T."/>
            <person name="Suzuki T."/>
            <person name="Yamada A."/>
            <person name="Dohmae N."/>
            <person name="Iwasaki S."/>
            <person name="Shinkai Y."/>
        </authorList>
    </citation>
    <scope>METHYLATION AT GLN-73</scope>
</reference>
<reference evidence="19" key="9">
    <citation type="journal article" date="2020" name="Science">
        <title>Elongational stalling activates mitoribosome-associated quality control.</title>
        <authorList>
            <person name="Desai N."/>
            <person name="Yang H."/>
            <person name="Chandrasekaran V."/>
            <person name="Kazi R."/>
            <person name="Minczuk M."/>
            <person name="Ramakrishnan V."/>
        </authorList>
    </citation>
    <scope>STRUCTURE BY ELECTRON MICROSCOPY (3.3 ANGSTROMS) OF 1-166 IN COMPLEX WITH MTRES1; PEPTIDYL TRNA AND MITORIBOSOMAL LARGE SUBUNIT</scope>
    <scope>FUNCTION</scope>
    <scope>INTERACTION WITH MTRES1</scope>
    <scope>RNA-BINDING</scope>
</reference>
<reference key="10">
    <citation type="journal article" date="2010" name="Am. J. Hum. Genet.">
        <title>Mutations in C12orf65 in patients with encephalomyopathy and a mitochondrial translation defect.</title>
        <authorList>
            <person name="Antonicka H."/>
            <person name="Ostergaard E."/>
            <person name="Sasarman F."/>
            <person name="Weraarpachai W."/>
            <person name="Wibrand F."/>
            <person name="Pedersen A.M."/>
            <person name="Rodenburg R.J."/>
            <person name="van der Knaap M.S."/>
            <person name="Smeitink J.A."/>
            <person name="Chrzanowska-Lightowlers Z.M."/>
            <person name="Shoubridge E.A."/>
        </authorList>
    </citation>
    <scope>INVOLVEMENT IN COXPD7</scope>
    <scope>SUBCELLULAR LOCATION</scope>
    <scope>VARIANT COXPD7 83-VAL--HIS-166 DELINS GLY</scope>
    <scope>CHARACTERIZATION OF VARIANT COXPD7 83-VAL--HIS-166 DELINS GLY</scope>
    <scope>RNA-BINDING</scope>
</reference>
<reference key="11">
    <citation type="journal article" date="2012" name="J. Med. Genet.">
        <title>A homozygous mutation of C12orf65 causes spastic paraplegia with optic atrophy and neuropathy (SPG55).</title>
        <authorList>
            <consortium name="Japan Spastic Paraplegia Research Consortium (JASPAC)"/>
            <person name="Shimazaki H."/>
            <person name="Takiyama Y."/>
            <person name="Ishiura H."/>
            <person name="Sakai C."/>
            <person name="Matsushima Y."/>
            <person name="Hatakeyama H."/>
            <person name="Honda J."/>
            <person name="Sakoe K."/>
            <person name="Naoi T."/>
            <person name="Namekawa M."/>
            <person name="Fukuda Y."/>
            <person name="Takahashi Y."/>
            <person name="Goto J."/>
            <person name="Tsuji S."/>
            <person name="Goto Y."/>
            <person name="Nakano I."/>
        </authorList>
    </citation>
    <scope>INVOLVEMENT IN SPG55</scope>
    <scope>VARIANT SPG55 132-ARG--HIS-166 DEL</scope>
</reference>
<reference key="12">
    <citation type="journal article" date="2013" name="Eur. J. Med. Genet.">
        <title>Mutations in the mitochondrial gene C12ORF65 lead to syndromic autosomal recessive intellectual disability and show genotype phenotype correlation.</title>
        <authorList>
            <person name="Buchert R."/>
            <person name="Uebe S."/>
            <person name="Radwan F."/>
            <person name="Tawamie H."/>
            <person name="Issa S."/>
            <person name="Shimazaki H."/>
            <person name="Henneke M."/>
            <person name="Ekici A.B."/>
            <person name="Reis A."/>
            <person name="Abou Jamra R."/>
        </authorList>
    </citation>
    <scope>INVOLVEMENT IN SPG55</scope>
    <scope>VARIANT SPG55 139-GLN--HIS-166 DEL</scope>
</reference>
<reference key="13">
    <citation type="journal article" date="2014" name="J. Neurol. Neurosurg. Psych.">
        <title>Novel C12orf65 mutations in patients with axonal neuropathy and optic atrophy.</title>
        <authorList>
            <consortium name="UKBEC"/>
            <person name="Tucci A."/>
            <person name="Liu Y.T."/>
            <person name="Preza E."/>
            <person name="Pitceathly R.D."/>
            <person name="Chalasani A."/>
            <person name="Plagnol V."/>
            <person name="Land J.M."/>
            <person name="Trabzuni D."/>
            <person name="Ryten M."/>
            <person name="Jaunmuktane Z."/>
            <person name="Reilly M.M."/>
            <person name="Brandner S."/>
            <person name="Hargreaves I."/>
            <person name="Hardy J."/>
            <person name="Singleton A.B."/>
            <person name="Abramov A.Y."/>
            <person name="Houlden H."/>
        </authorList>
    </citation>
    <scope>INVOLVEMENT IN SPG55</scope>
    <scope>VARIANT SPG55 116-VAL--HIS-166 DEL</scope>
    <scope>CHARACTERIZATION OF VARIANT SPG55 116-VAL--HIS-166 DEL</scope>
    <scope>TISSUE SPECIFICITY</scope>
</reference>
<reference key="14">
    <citation type="journal article" date="2014" name="J. Neuromuscul. Dis.">
        <title>Behr's Syndrome is Typically Associated with Disturbed Mitochondrial Translation and Mutations in the C12orf65 Gene.</title>
        <authorList>
            <person name="Pyle A."/>
            <person name="Ramesh V."/>
            <person name="Bartsakoulia M."/>
            <person name="Boczonadi V."/>
            <person name="Gomez-Duran A."/>
            <person name="Herczegfalvi A."/>
            <person name="Blakely E.L."/>
            <person name="Smertenko T."/>
            <person name="Duff J."/>
            <person name="Eglon G."/>
            <person name="Moore D."/>
            <person name="Yu-Wai-Man P."/>
            <person name="Douroudis K."/>
            <person name="Santibanez-Koref M."/>
            <person name="Griffin H."/>
            <person name="Lochmueller H."/>
            <person name="Karcagi V."/>
            <person name="Taylor R.W."/>
            <person name="Chinnery P.F."/>
            <person name="Horvath R."/>
        </authorList>
    </citation>
    <scope>INVOLVEMENT IN SPG55</scope>
</reference>
<reference key="15">
    <citation type="journal article" date="2016" name="J. Neurol. Neurosurg. Psych.">
        <title>Homozygous p.V116* mutation in C12orf65 results in Leigh syndrome.</title>
        <authorList>
            <person name="Imagawa E."/>
            <person name="Fattal-Valevski A."/>
            <person name="Eyal O."/>
            <person name="Miyatake S."/>
            <person name="Saada A."/>
            <person name="Nakashima M."/>
            <person name="Tsurusaki Y."/>
            <person name="Saitsu H."/>
            <person name="Miyake N."/>
            <person name="Matsumoto N."/>
        </authorList>
    </citation>
    <scope>INVOLVEMENT IN COXPD7</scope>
    <scope>VARIANT COXPD7 116-VAL--HIS-166 DEL</scope>
</reference>
<reference key="16">
    <citation type="journal article" date="2020" name="Genet. Mol. Biol.">
        <title>Leigh syndrome in a patient with a novel C12orf65 pathogenic variant: case report and literature review.</title>
        <authorList>
            <person name="Perrone E."/>
            <person name="Cavole T.R."/>
            <person name="Oliveira M.G."/>
            <person name="Virmond L.D.A."/>
            <person name="Silva M.F.B."/>
            <person name="Soares M.F.F."/>
            <person name="Iglesias S.B.O."/>
            <person name="Falconi A."/>
            <person name="Silva J.S."/>
            <person name="Nakano V."/>
            <person name="Milanezi M.F."/>
            <person name="Mendes C.S.C."/>
            <person name="Curiati M.A."/>
            <person name="Micheletti C."/>
        </authorList>
    </citation>
    <scope>INVOLVEMENT IN COXPD7</scope>
</reference>
<reference key="17">
    <citation type="journal article" date="2020" name="Genet. Mol. Biol.">
        <title>The Leigh phenotype resulting from C12orf65 variants.</title>
        <authorList>
            <person name="Finsterer J."/>
        </authorList>
    </citation>
    <scope>INVOLVEMENT IN COXPD7</scope>
</reference>
<evidence type="ECO:0000250" key="1">
    <source>
        <dbReference type="UniProtKB" id="Q80VP5"/>
    </source>
</evidence>
<evidence type="ECO:0000255" key="2"/>
<evidence type="ECO:0000256" key="3">
    <source>
        <dbReference type="SAM" id="MobiDB-lite"/>
    </source>
</evidence>
<evidence type="ECO:0000269" key="4">
    <source>
    </source>
</evidence>
<evidence type="ECO:0000269" key="5">
    <source>
    </source>
</evidence>
<evidence type="ECO:0000269" key="6">
    <source>
    </source>
</evidence>
<evidence type="ECO:0000269" key="7">
    <source>
    </source>
</evidence>
<evidence type="ECO:0000269" key="8">
    <source>
    </source>
</evidence>
<evidence type="ECO:0000269" key="9">
    <source>
    </source>
</evidence>
<evidence type="ECO:0000269" key="10">
    <source>
    </source>
</evidence>
<evidence type="ECO:0000269" key="11">
    <source>
    </source>
</evidence>
<evidence type="ECO:0000269" key="12">
    <source>
    </source>
</evidence>
<evidence type="ECO:0000269" key="13">
    <source>
    </source>
</evidence>
<evidence type="ECO:0000269" key="14">
    <source>
    </source>
</evidence>
<evidence type="ECO:0000269" key="15">
    <source>
    </source>
</evidence>
<evidence type="ECO:0000303" key="16">
    <source>
    </source>
</evidence>
<evidence type="ECO:0000305" key="17"/>
<evidence type="ECO:0000312" key="18">
    <source>
        <dbReference type="HGNC" id="HGNC:26784"/>
    </source>
</evidence>
<evidence type="ECO:0000312" key="19">
    <source>
        <dbReference type="PDB" id="7A5H"/>
    </source>
</evidence>
<organism>
    <name type="scientific">Homo sapiens</name>
    <name type="common">Human</name>
    <dbReference type="NCBI Taxonomy" id="9606"/>
    <lineage>
        <taxon>Eukaryota</taxon>
        <taxon>Metazoa</taxon>
        <taxon>Chordata</taxon>
        <taxon>Craniata</taxon>
        <taxon>Vertebrata</taxon>
        <taxon>Euteleostomi</taxon>
        <taxon>Mammalia</taxon>
        <taxon>Eutheria</taxon>
        <taxon>Euarchontoglires</taxon>
        <taxon>Primates</taxon>
        <taxon>Haplorrhini</taxon>
        <taxon>Catarrhini</taxon>
        <taxon>Hominidae</taxon>
        <taxon>Homo</taxon>
    </lineage>
</organism>
<gene>
    <name evidence="18" type="primary">MTRFR</name>
    <name type="ORF">C12orf65</name>
    <name type="ORF">My030</name>
</gene>